<accession>Q0K1E0</accession>
<accession>P09657</accession>
<accession>P77811</accession>
<reference key="1">
    <citation type="journal article" date="1995" name="J. Bacteriol.">
        <title>Characterization of the duplicate ribulose-1,5-bisphosphate carboxylase genes and cbb promoters of Alcaligenes eutrophus.</title>
        <authorList>
            <person name="Kusian B."/>
            <person name="Bednarski R."/>
            <person name="Husemann M."/>
            <person name="Bowien B."/>
        </authorList>
    </citation>
    <scope>NUCLEOTIDE SEQUENCE [GENOMIC DNA]</scope>
    <scope>EXPRESSION UNDER DIFFERENT GROWTH CONDITIONS</scope>
</reference>
<reference key="2">
    <citation type="journal article" date="2006" name="Nat. Biotechnol.">
        <title>Genome sequence of the bioplastic-producing 'Knallgas' bacterium Ralstonia eutropha H16.</title>
        <authorList>
            <person name="Pohlmann A."/>
            <person name="Fricke W.F."/>
            <person name="Reinecke F."/>
            <person name="Kusian B."/>
            <person name="Liesegang H."/>
            <person name="Cramm R."/>
            <person name="Eitinger T."/>
            <person name="Ewering C."/>
            <person name="Poetter M."/>
            <person name="Schwartz E."/>
            <person name="Strittmatter A."/>
            <person name="Voss I."/>
            <person name="Gottschalk G."/>
            <person name="Steinbuechel A."/>
            <person name="Friedrich B."/>
            <person name="Bowien B."/>
        </authorList>
    </citation>
    <scope>NUCLEOTIDE SEQUENCE [LARGE SCALE GENOMIC DNA]</scope>
    <source>
        <strain>ATCC 17699 / DSM 428 / KCTC 22496 / NCIMB 10442 / H16 / Stanier 337</strain>
    </source>
</reference>
<reference key="3">
    <citation type="journal article" date="1991" name="Mol. Microbiol.">
        <title>Identification of cfxR, an activator gene of autotrophic CO2 fixation in Alcaligenes eutrophus.</title>
        <authorList>
            <person name="Windhoevel U."/>
            <person name="Bowien B."/>
        </authorList>
    </citation>
    <scope>NUCLEOTIDE SEQUENCE [GENOMIC DNA] OF 1-10</scope>
</reference>
<comment type="function">
    <text evidence="1">RuBisCO catalyzes two reactions: the carboxylation of D-ribulose 1,5-bisphosphate, the primary event in carbon dioxide fixation, as well as the oxidative fragmentation of the pentose substrate. Both reactions occur simultaneously and in competition at the same active site (By similarity).</text>
</comment>
<comment type="catalytic activity">
    <reaction>
        <text>2 (2R)-3-phosphoglycerate + 2 H(+) = D-ribulose 1,5-bisphosphate + CO2 + H2O</text>
        <dbReference type="Rhea" id="RHEA:23124"/>
        <dbReference type="ChEBI" id="CHEBI:15377"/>
        <dbReference type="ChEBI" id="CHEBI:15378"/>
        <dbReference type="ChEBI" id="CHEBI:16526"/>
        <dbReference type="ChEBI" id="CHEBI:57870"/>
        <dbReference type="ChEBI" id="CHEBI:58272"/>
        <dbReference type="EC" id="4.1.1.39"/>
    </reaction>
</comment>
<comment type="catalytic activity">
    <reaction>
        <text>D-ribulose 1,5-bisphosphate + O2 = 2-phosphoglycolate + (2R)-3-phosphoglycerate + 2 H(+)</text>
        <dbReference type="Rhea" id="RHEA:36631"/>
        <dbReference type="ChEBI" id="CHEBI:15378"/>
        <dbReference type="ChEBI" id="CHEBI:15379"/>
        <dbReference type="ChEBI" id="CHEBI:57870"/>
        <dbReference type="ChEBI" id="CHEBI:58033"/>
        <dbReference type="ChEBI" id="CHEBI:58272"/>
    </reaction>
</comment>
<comment type="cofactor">
    <cofactor evidence="1">
        <name>Mg(2+)</name>
        <dbReference type="ChEBI" id="CHEBI:18420"/>
    </cofactor>
    <text evidence="1">Binds 1 Mg(2+) ion per subunit.</text>
</comment>
<comment type="subunit">
    <text evidence="1">Heterohexadecamer of 8 large chains and 8 small chains; disulfide-linked. The disulfide link is formed within the large subunit homodimers (By similarity).</text>
</comment>
<comment type="induction">
    <text>Total RuBisCO activity (both chromosome and plasmid-derived enzyme) is high under lithoautotrophic growth conditions, intermediate when grown on fructose and poor when grown on pyruvate.</text>
</comment>
<comment type="PTM">
    <text evidence="1">The disulfide bond which can form between Cys-278 in the large chain dimeric partners within the hexadecamer appears to be associated with oxidative stress and protein turnover.</text>
</comment>
<comment type="miscellaneous">
    <text evidence="1">The basic functional RuBisCO is composed of a large chain homodimer in a 'head-to-tail' conformation. In form I RuBisCO this homodimer is arranged in a barrel-like tetramer with the small subunits forming a tetrameric 'cap' on each end of the 'barrel' (By similarity).</text>
</comment>
<comment type="similarity">
    <text evidence="2">Belongs to the RuBisCO large chain family. Type I subfamily.</text>
</comment>
<dbReference type="EC" id="4.1.1.39"/>
<dbReference type="EMBL" id="U20584">
    <property type="protein sequence ID" value="AAA83745.1"/>
    <property type="molecule type" value="Genomic_DNA"/>
</dbReference>
<dbReference type="EMBL" id="AM260480">
    <property type="protein sequence ID" value="CAJ96184.1"/>
    <property type="molecule type" value="Genomic_DNA"/>
</dbReference>
<dbReference type="EMBL" id="M65065">
    <property type="protein sequence ID" value="AAA21981.1"/>
    <property type="molecule type" value="Genomic_DNA"/>
</dbReference>
<dbReference type="PIR" id="I39557">
    <property type="entry name" value="I39557"/>
</dbReference>
<dbReference type="RefSeq" id="WP_010809289.1">
    <property type="nucleotide sequence ID" value="NZ_CP039288.1"/>
</dbReference>
<dbReference type="SMR" id="Q0K1E0"/>
<dbReference type="STRING" id="381666.H16_B1395"/>
<dbReference type="KEGG" id="reh:H16_B1395"/>
<dbReference type="eggNOG" id="COG1850">
    <property type="taxonomic scope" value="Bacteria"/>
</dbReference>
<dbReference type="HOGENOM" id="CLU_031450_2_0_4"/>
<dbReference type="OrthoDB" id="9770811at2"/>
<dbReference type="Proteomes" id="UP000008210">
    <property type="component" value="Chromosome 2"/>
</dbReference>
<dbReference type="GO" id="GO:0000287">
    <property type="term" value="F:magnesium ion binding"/>
    <property type="evidence" value="ECO:0007669"/>
    <property type="project" value="UniProtKB-UniRule"/>
</dbReference>
<dbReference type="GO" id="GO:0004497">
    <property type="term" value="F:monooxygenase activity"/>
    <property type="evidence" value="ECO:0007669"/>
    <property type="project" value="UniProtKB-KW"/>
</dbReference>
<dbReference type="GO" id="GO:0016984">
    <property type="term" value="F:ribulose-bisphosphate carboxylase activity"/>
    <property type="evidence" value="ECO:0007669"/>
    <property type="project" value="UniProtKB-UniRule"/>
</dbReference>
<dbReference type="GO" id="GO:0019253">
    <property type="term" value="P:reductive pentose-phosphate cycle"/>
    <property type="evidence" value="ECO:0007669"/>
    <property type="project" value="UniProtKB-UniRule"/>
</dbReference>
<dbReference type="CDD" id="cd08212">
    <property type="entry name" value="RuBisCO_large_I"/>
    <property type="match status" value="1"/>
</dbReference>
<dbReference type="Gene3D" id="3.20.20.110">
    <property type="entry name" value="Ribulose bisphosphate carboxylase, large subunit, C-terminal domain"/>
    <property type="match status" value="1"/>
</dbReference>
<dbReference type="Gene3D" id="3.30.70.150">
    <property type="entry name" value="RuBisCO large subunit, N-terminal domain"/>
    <property type="match status" value="1"/>
</dbReference>
<dbReference type="HAMAP" id="MF_01338">
    <property type="entry name" value="RuBisCO_L_type1"/>
    <property type="match status" value="1"/>
</dbReference>
<dbReference type="InterPro" id="IPR033966">
    <property type="entry name" value="RuBisCO"/>
</dbReference>
<dbReference type="InterPro" id="IPR020878">
    <property type="entry name" value="RuBisCo_large_chain_AS"/>
</dbReference>
<dbReference type="InterPro" id="IPR000685">
    <property type="entry name" value="RuBisCO_lsu_C"/>
</dbReference>
<dbReference type="InterPro" id="IPR036376">
    <property type="entry name" value="RuBisCO_lsu_C_sf"/>
</dbReference>
<dbReference type="InterPro" id="IPR017443">
    <property type="entry name" value="RuBisCO_lsu_fd_N"/>
</dbReference>
<dbReference type="InterPro" id="IPR036422">
    <property type="entry name" value="RuBisCO_lsu_N_sf"/>
</dbReference>
<dbReference type="InterPro" id="IPR020888">
    <property type="entry name" value="RuBisCO_lsuI"/>
</dbReference>
<dbReference type="NCBIfam" id="NF003252">
    <property type="entry name" value="PRK04208.1"/>
    <property type="match status" value="1"/>
</dbReference>
<dbReference type="PANTHER" id="PTHR42704">
    <property type="entry name" value="RIBULOSE BISPHOSPHATE CARBOXYLASE"/>
    <property type="match status" value="1"/>
</dbReference>
<dbReference type="PANTHER" id="PTHR42704:SF17">
    <property type="entry name" value="RIBULOSE BISPHOSPHATE CARBOXYLASE LARGE CHAIN"/>
    <property type="match status" value="1"/>
</dbReference>
<dbReference type="Pfam" id="PF00016">
    <property type="entry name" value="RuBisCO_large"/>
    <property type="match status" value="1"/>
</dbReference>
<dbReference type="Pfam" id="PF02788">
    <property type="entry name" value="RuBisCO_large_N"/>
    <property type="match status" value="1"/>
</dbReference>
<dbReference type="SFLD" id="SFLDG01052">
    <property type="entry name" value="RuBisCO"/>
    <property type="match status" value="1"/>
</dbReference>
<dbReference type="SFLD" id="SFLDS00014">
    <property type="entry name" value="RuBisCO"/>
    <property type="match status" value="1"/>
</dbReference>
<dbReference type="SFLD" id="SFLDG00301">
    <property type="entry name" value="RuBisCO-like_proteins"/>
    <property type="match status" value="1"/>
</dbReference>
<dbReference type="SUPFAM" id="SSF51649">
    <property type="entry name" value="RuBisCo, C-terminal domain"/>
    <property type="match status" value="1"/>
</dbReference>
<dbReference type="SUPFAM" id="SSF54966">
    <property type="entry name" value="RuBisCO, large subunit, small (N-terminal) domain"/>
    <property type="match status" value="1"/>
</dbReference>
<dbReference type="PROSITE" id="PS00157">
    <property type="entry name" value="RUBISCO_LARGE"/>
    <property type="match status" value="1"/>
</dbReference>
<organism>
    <name type="scientific">Cupriavidus necator (strain ATCC 17699 / DSM 428 / KCTC 22496 / NCIMB 10442 / H16 / Stanier 337)</name>
    <name type="common">Ralstonia eutropha</name>
    <dbReference type="NCBI Taxonomy" id="381666"/>
    <lineage>
        <taxon>Bacteria</taxon>
        <taxon>Pseudomonadati</taxon>
        <taxon>Pseudomonadota</taxon>
        <taxon>Betaproteobacteria</taxon>
        <taxon>Burkholderiales</taxon>
        <taxon>Burkholderiaceae</taxon>
        <taxon>Cupriavidus</taxon>
    </lineage>
</organism>
<gene>
    <name type="primary">cbbL1</name>
    <name type="synonym">cbbL</name>
    <name type="synonym">cbxLC</name>
    <name type="synonym">cfxLC</name>
    <name type="ordered locus">H16_B1395</name>
</gene>
<name>RBL1C_CUPNH</name>
<sequence>MNAPESVQAKPRKRYDAGVMKYKEMGYWDGDYEPKDTDLLALFRITPQDGVDPVEAAAAVAGESSTATWTVVWTDRLTACDMYRAKAYRVDPVPNNPEQFFCYVAYDLSLFEEGSIANLTASIIGNVFSFKPIKAARLEDMRFPVAYVKTFAGPSTGIIVERERLDKFGRPLLGATTKPKLGLSGRNYGRVVYEGLKGGLDFMKDDENINSQPFMHWRDRFLFVMDAVNKASAATGEVKGSYLNVTAGTMEEMYRRAEFAKSLGSVIIMIDLIVGWTCIQSMSNWCRQNDMILHLHRAGHGTYTRQKNHGVSFRVIAKWLRLAGVDHMHTGTAVGKLEGDPLTVQGYYNVCRDAYTHADLSRGLFFDQDWASLRKVMPVASGGIHAGQMHQLISLFGDDVVLQFGGGTIGHPQGIQAGATANRVALEAMVLARNEGRDILNEGPEILRDAARWCGPLRAALDTWGDISFNYTPTDTSDFAPTASVA</sequence>
<proteinExistence type="evidence at transcript level"/>
<protein>
    <recommendedName>
        <fullName>Ribulose bisphosphate carboxylase large chain, chromosomal</fullName>
        <shortName>RuBisCO large subunit</shortName>
        <ecNumber>4.1.1.39</ecNumber>
    </recommendedName>
</protein>
<keyword id="KW-0113">Calvin cycle</keyword>
<keyword id="KW-0120">Carbon dioxide fixation</keyword>
<keyword id="KW-1015">Disulfide bond</keyword>
<keyword id="KW-0456">Lyase</keyword>
<keyword id="KW-0460">Magnesium</keyword>
<keyword id="KW-0479">Metal-binding</keyword>
<keyword id="KW-0503">Monooxygenase</keyword>
<keyword id="KW-0560">Oxidoreductase</keyword>
<keyword id="KW-1185">Reference proteome</keyword>
<evidence type="ECO:0000250" key="1"/>
<evidence type="ECO:0000305" key="2"/>
<feature type="chain" id="PRO_0000273254" description="Ribulose bisphosphate carboxylase large chain, chromosomal">
    <location>
        <begin position="1"/>
        <end position="486"/>
    </location>
</feature>
<feature type="active site" description="Proton acceptor" evidence="1">
    <location>
        <position position="178"/>
    </location>
</feature>
<feature type="active site" description="Proton acceptor" evidence="1">
    <location>
        <position position="296"/>
    </location>
</feature>
<feature type="binding site" description="in homodimeric partner" evidence="1">
    <location>
        <position position="126"/>
    </location>
    <ligand>
        <name>substrate</name>
    </ligand>
</feature>
<feature type="binding site" evidence="1">
    <location>
        <position position="176"/>
    </location>
    <ligand>
        <name>substrate</name>
    </ligand>
</feature>
<feature type="binding site" evidence="1">
    <location>
        <position position="180"/>
    </location>
    <ligand>
        <name>substrate</name>
    </ligand>
</feature>
<feature type="binding site" description="via carbamate group" evidence="1">
    <location>
        <position position="204"/>
    </location>
    <ligand>
        <name>Mg(2+)</name>
        <dbReference type="ChEBI" id="CHEBI:18420"/>
    </ligand>
</feature>
<feature type="binding site" evidence="1">
    <location>
        <position position="206"/>
    </location>
    <ligand>
        <name>Mg(2+)</name>
        <dbReference type="ChEBI" id="CHEBI:18420"/>
    </ligand>
</feature>
<feature type="binding site" evidence="1">
    <location>
        <position position="207"/>
    </location>
    <ligand>
        <name>Mg(2+)</name>
        <dbReference type="ChEBI" id="CHEBI:18420"/>
    </ligand>
</feature>
<feature type="binding site" evidence="1">
    <location>
        <position position="297"/>
    </location>
    <ligand>
        <name>substrate</name>
    </ligand>
</feature>
<feature type="binding site" evidence="1">
    <location>
        <position position="329"/>
    </location>
    <ligand>
        <name>substrate</name>
    </ligand>
</feature>
<feature type="binding site" evidence="1">
    <location>
        <position position="381"/>
    </location>
    <ligand>
        <name>substrate</name>
    </ligand>
</feature>
<feature type="site" description="Transition state stabilizer" evidence="1">
    <location>
        <position position="336"/>
    </location>
</feature>
<feature type="modified residue" description="N6-carboxylysine" evidence="1">
    <location>
        <position position="204"/>
    </location>
</feature>
<feature type="sequence conflict" description="In Ref. 1; AAA83745." evidence="2" ref="1">
    <original>YRAKAY</original>
    <variation>SVQGL</variation>
    <location>
        <begin position="83"/>
        <end position="88"/>
    </location>
</feature>